<dbReference type="EMBL" id="AB033988">
    <property type="protein sequence ID" value="BAA85888.1"/>
    <property type="molecule type" value="Genomic_DNA"/>
</dbReference>
<dbReference type="SMR" id="Q9S0K9"/>
<dbReference type="OMA" id="GFKHGVP"/>
<dbReference type="GO" id="GO:0005524">
    <property type="term" value="F:ATP binding"/>
    <property type="evidence" value="ECO:0007669"/>
    <property type="project" value="UniProtKB-UniRule"/>
</dbReference>
<dbReference type="GO" id="GO:0005525">
    <property type="term" value="F:GTP binding"/>
    <property type="evidence" value="ECO:0007669"/>
    <property type="project" value="UniProtKB-UniRule"/>
</dbReference>
<dbReference type="Gene3D" id="3.40.50.300">
    <property type="entry name" value="P-loop containing nucleotide triphosphate hydrolases"/>
    <property type="match status" value="1"/>
</dbReference>
<dbReference type="HAMAP" id="MF_00636">
    <property type="entry name" value="RapZ_like"/>
    <property type="match status" value="1"/>
</dbReference>
<dbReference type="InterPro" id="IPR027417">
    <property type="entry name" value="P-loop_NTPase"/>
</dbReference>
<dbReference type="InterPro" id="IPR005337">
    <property type="entry name" value="RapZ-like"/>
</dbReference>
<dbReference type="InterPro" id="IPR053930">
    <property type="entry name" value="RapZ-like_N"/>
</dbReference>
<dbReference type="InterPro" id="IPR053931">
    <property type="entry name" value="RapZ_C"/>
</dbReference>
<dbReference type="NCBIfam" id="NF003828">
    <property type="entry name" value="PRK05416.1"/>
    <property type="match status" value="1"/>
</dbReference>
<dbReference type="PANTHER" id="PTHR30448">
    <property type="entry name" value="RNASE ADAPTER PROTEIN RAPZ"/>
    <property type="match status" value="1"/>
</dbReference>
<dbReference type="PANTHER" id="PTHR30448:SF0">
    <property type="entry name" value="RNASE ADAPTER PROTEIN RAPZ"/>
    <property type="match status" value="1"/>
</dbReference>
<dbReference type="Pfam" id="PF22740">
    <property type="entry name" value="PapZ_C"/>
    <property type="match status" value="1"/>
</dbReference>
<dbReference type="Pfam" id="PF03668">
    <property type="entry name" value="RapZ-like_N"/>
    <property type="match status" value="1"/>
</dbReference>
<dbReference type="PIRSF" id="PIRSF005052">
    <property type="entry name" value="P-loopkin"/>
    <property type="match status" value="1"/>
</dbReference>
<dbReference type="SUPFAM" id="SSF52540">
    <property type="entry name" value="P-loop containing nucleoside triphosphate hydrolases"/>
    <property type="match status" value="1"/>
</dbReference>
<reference key="1">
    <citation type="journal article" date="2000" name="Biochim. Biophys. Acta">
        <title>Cloning and characterization of the gene encoding RNA polymerase sigma factor 54 of deep-sea piezophilic Shewanella violacea.</title>
        <authorList>
            <person name="Ikegami A."/>
            <person name="Nakasone K."/>
            <person name="Fujita M."/>
            <person name="Fujii S."/>
            <person name="Kato C."/>
            <person name="Usami R."/>
            <person name="Horikoshi K."/>
        </authorList>
    </citation>
    <scope>NUCLEOTIDE SEQUENCE [GENOMIC DNA]</scope>
</reference>
<keyword id="KW-0067">ATP-binding</keyword>
<keyword id="KW-0342">GTP-binding</keyword>
<keyword id="KW-0547">Nucleotide-binding</keyword>
<organism>
    <name type="scientific">Shewanella violacea</name>
    <dbReference type="NCBI Taxonomy" id="60217"/>
    <lineage>
        <taxon>Bacteria</taxon>
        <taxon>Pseudomonadati</taxon>
        <taxon>Pseudomonadota</taxon>
        <taxon>Gammaproteobacteria</taxon>
        <taxon>Alteromonadales</taxon>
        <taxon>Shewanellaceae</taxon>
        <taxon>Shewanella</taxon>
    </lineage>
</organism>
<proteinExistence type="inferred from homology"/>
<comment type="function">
    <text evidence="1">Displays ATPase and GTPase activities.</text>
</comment>
<comment type="similarity">
    <text evidence="1">Belongs to the RapZ-like family.</text>
</comment>
<name>YPTO_SHEVI</name>
<evidence type="ECO:0000255" key="1">
    <source>
        <dbReference type="HAMAP-Rule" id="MF_00636"/>
    </source>
</evidence>
<accession>Q9S0K9</accession>
<sequence length="282" mass="32435">MKLVMVSGRSGSGKSVVLRVLEDLGYYCVDNLPLPLMDTLLEQLKGSTDLVAISVDVRNMPEQDKEFLKQLANLPKGTELLSFFLDSSDEVLLKRYSETRRLHPLSRTKTSLKEAIEHERELLEPVSKMVDHYIDTSNLNIYDLSDKIREILLGSVDKELVINFESFGFKYGMPVEADFMFDVRFLPNPHWEPELRPMTGLDEPVQLFLSQQPTVNKFIWQIENLLATWLPHLERNNRSYLTIAIGCTGGQHRSVYVTEQLAKLFANSKHKIQARHRELSDD</sequence>
<feature type="chain" id="PRO_0000107754" description="Nucleotide-binding protein in ptsN-ptsO intergenic region">
    <location>
        <begin position="1"/>
        <end position="282"/>
    </location>
</feature>
<feature type="binding site" evidence="1">
    <location>
        <begin position="8"/>
        <end position="15"/>
    </location>
    <ligand>
        <name>ATP</name>
        <dbReference type="ChEBI" id="CHEBI:30616"/>
    </ligand>
</feature>
<feature type="binding site" evidence="1">
    <location>
        <begin position="56"/>
        <end position="59"/>
    </location>
    <ligand>
        <name>GTP</name>
        <dbReference type="ChEBI" id="CHEBI:37565"/>
    </ligand>
</feature>
<protein>
    <recommendedName>
        <fullName evidence="1">Nucleotide-binding protein in ptsN-ptsO intergenic region</fullName>
    </recommendedName>
</protein>